<sequence length="2009" mass="226945">MSLGLAGSLQAQLALEIVIQSLENCVLGPNQEKSLSVQNRVQDFQGASLLVCAREVIASNLSRPETPAPLQVPEMASLLSLQEENQLLQQELSRVEDLLAQSRAERDELAIKYNAVNERLEQAVRLETGELEAQEPRGLVRQSVELRRQLQEEQSSYRRKLQAYQEGQQRQAQLVQRLQAKILQYKKQCSELEKQLMDRSTELEQQRLRDTEHSQDLDSALLRLEEEQQRSASLAQVNAMLREQLDQANLANQALSEDIRKVTSDWTRSCKELEQREAVWRREEESFNTYFSSEHSRLLRLWRQVMGLRRQASEVKMGTERDLLQLGGELVRTSRAVQELGLGLSASLHRAESKAEAALEKQKLLQAQLEEQLQAKLLREKDLAQLQVQSDLDKADLSARVTELALSVEHLQNQNSEKDQVNRTLSDKLEALESLRLQEQTTLDTEDGEGLQQTLRDLAQAALSDTESGVQLSSSERTADTSDGSLRGFSGQRTPTPPRHSPGRGRSPRRGLSPACSDSSTLTLIHSALHKRQLQVQDMRGRYEASQELLGSVRKQLSDSEGERRGLEEQLQRLRDQTAASAQAQEDAQREAQRLRSANELLSREKGNLTHSLQVTQQQAKELRQELEKLQAAQEELKRQHNQLEDAQEDSVQEGARARRELERSHRQLEQLEVKRSGLTKELVEVREALSCAILQRDVLQTEKAEVAEALTKAEAGRAQLELSLTKLRAEEASLRDSLSKMSALNESLAQDKLELNRLIAQLEEEKVALLGRQQQAEHATTMAVEKQELLEQLRLEQEVERQGLQGSLCVAEQAREALEQQILVLRSERSHLQEQLAQLSRQLSGRDQELEQALRESQRQVEALERAAREKEAMAKERAGLAVKLAAAEREGRTLSEEAIRLRLEKEALESSLFDVQRQLAQLEARREQLEADSQALLLAKETLTGELAGLRQQVTSTEEKAALDKELMTQKLVQAEREAQASLREQRAAHEEDLQRLQHEKEAAWRELQAERAQLQGQLQQEREELLARMEAEKEELSKEIAALQQERDEGLLLAESEKQQALSLKESEKTALSEKLMGTRHSLAAISLEMERQKRDAQSRQEQDRNTLNALTSELRDLRAQLEEATAAHAQTVKELEERTGNLGRQREACMREAEELRTQLRVLEDTRDGLRRELLEAQRKGRDSQDSSEAHRQEASELRRSLSEGAKEREALRRSNEELRSAVKKAESERISLKLANEDKEQKLALLEEARVSVAKEAGELRASLQEVERSRLEARRELQELRRQMKTLDSDNGRLGRELADLQGRLALGERTEKESRREALGLRQRLLKGESSLEALKQELQGSQRKLQEQEAEFRARERGLLGSLEEARGAEKRLLDSARSLELRLEAVRAETSELGLRLSAAEGRAQGLEVELARVEAQRRVAEAQLGGLRSALRRGLGLGRVSSSPAREAPAGGSGDGLSSPSPLEYSPRSQPPSPGLIASPAPPDLDPEAVRDALRDFLQELRSAQRERDELKVQTSTLSQQLVEMEAERDHAASRAKQLQKAVAESEEAWRSADRRLSGAQAELALQEESVRRSKRECRATLDQMAVLERSLQATESELRASQEKVSKMKATEAKLESDKRRLKEVLDASESRSIKLELQRRALEGELQRSRLGLGDREAHAQALQDRVDSLQRQVADSEVKAGTLQLTVERLSGALAKVEESEGNLRSKVQSLTDALTQSSASLSSTQDKNLHLQKALSTCEHDRQVLQERLDAARQALSEARRQSSSLGEQVQTLRGELASLELQRGDAEGQLQQLQQALRQRQEGEAMALRSVQKLQEERRLLQERLGSLQRALAQLEAEKRDLERSALQFDKDRVALRKTLDKVEREKLRSHEDTLRLNAERGRLDRTLTGAELDLAEAQQQIQHLEAQVDVALEGNHNPVQPEAGEQQLELQQEVERLRSAQVQTERTLEARERAHRQRVSGLEEQVSTLKAQLHQELRRSSASVSLPPGTPEK</sequence>
<name>CROCC_MOUSE</name>
<keyword id="KW-0025">Alternative splicing</keyword>
<keyword id="KW-0131">Cell cycle</keyword>
<keyword id="KW-0966">Cell projection</keyword>
<keyword id="KW-0969">Cilium</keyword>
<keyword id="KW-0970">Cilium biogenesis/degradation</keyword>
<keyword id="KW-0175">Coiled coil</keyword>
<keyword id="KW-0963">Cytoplasm</keyword>
<keyword id="KW-0206">Cytoskeleton</keyword>
<keyword id="KW-0903">Direct protein sequencing</keyword>
<keyword id="KW-0597">Phosphoprotein</keyword>
<keyword id="KW-1185">Reference proteome</keyword>
<gene>
    <name evidence="16" type="primary">Crocc</name>
    <name evidence="15" type="synonym">Kiaa0445</name>
</gene>
<accession>Q8CJ40</accession>
<accession>A2AA81</accession>
<accession>Q7TQL2</accession>
<accession>Q80U01</accession>
<accession>Q8R0B9</accession>
<reference evidence="11 14" key="1">
    <citation type="journal article" date="2002" name="J. Cell Biol.">
        <title>Rootletin, a novel coiled-coil protein, is a structural component of the ciliary rootlet.</title>
        <authorList>
            <person name="Yang J."/>
            <person name="Liu X."/>
            <person name="Yue G."/>
            <person name="Adamian M."/>
            <person name="Bulgakov O."/>
            <person name="Li T."/>
        </authorList>
    </citation>
    <scope>NUCLEOTIDE SEQUENCE [MRNA] (ISOFORM 1)</scope>
    <scope>FUNCTION</scope>
    <scope>SUBUNIT</scope>
    <scope>SUBCELLULAR LOCATION</scope>
    <scope>TISSUE SPECIFICITY</scope>
    <scope>INTERACTION WITH KLC3</scope>
    <source>
        <strain evidence="14">C57BL/6J</strain>
    </source>
</reference>
<reference key="2">
    <citation type="journal article" date="2009" name="PLoS Biol.">
        <title>Lineage-specific biology revealed by a finished genome assembly of the mouse.</title>
        <authorList>
            <person name="Church D.M."/>
            <person name="Goodstadt L."/>
            <person name="Hillier L.W."/>
            <person name="Zody M.C."/>
            <person name="Goldstein S."/>
            <person name="She X."/>
            <person name="Bult C.J."/>
            <person name="Agarwala R."/>
            <person name="Cherry J.L."/>
            <person name="DiCuccio M."/>
            <person name="Hlavina W."/>
            <person name="Kapustin Y."/>
            <person name="Meric P."/>
            <person name="Maglott D."/>
            <person name="Birtle Z."/>
            <person name="Marques A.C."/>
            <person name="Graves T."/>
            <person name="Zhou S."/>
            <person name="Teague B."/>
            <person name="Potamousis K."/>
            <person name="Churas C."/>
            <person name="Place M."/>
            <person name="Herschleb J."/>
            <person name="Runnheim R."/>
            <person name="Forrest D."/>
            <person name="Amos-Landgraf J."/>
            <person name="Schwartz D.C."/>
            <person name="Cheng Z."/>
            <person name="Lindblad-Toh K."/>
            <person name="Eichler E.E."/>
            <person name="Ponting C.P."/>
        </authorList>
    </citation>
    <scope>NUCLEOTIDE SEQUENCE [LARGE SCALE GENOMIC DNA]</scope>
    <source>
        <strain>C57BL/6J</strain>
    </source>
</reference>
<reference evidence="11 13" key="3">
    <citation type="journal article" date="2004" name="Genome Res.">
        <title>The status, quality, and expansion of the NIH full-length cDNA project: the Mammalian Gene Collection (MGC).</title>
        <authorList>
            <consortium name="The MGC Project Team"/>
        </authorList>
    </citation>
    <scope>NUCLEOTIDE SEQUENCE [LARGE SCALE MRNA] (ISOFORM 2)</scope>
    <source>
        <strain evidence="12">C57BL/6J</strain>
        <strain evidence="13">FVB/N</strain>
        <tissue evidence="13">Colon</tissue>
        <tissue evidence="12">Retina</tissue>
    </source>
</reference>
<reference evidence="11 15" key="4">
    <citation type="journal article" date="2003" name="DNA Res.">
        <title>Prediction of the coding sequences of mouse homologues of KIAA gene: II. The complete nucleotide sequences of 400 mouse KIAA-homologous cDNAs identified by screening of terminal sequences of cDNA clones randomly sampled from size-fractionated libraries.</title>
        <authorList>
            <person name="Okazaki N."/>
            <person name="Kikuno R."/>
            <person name="Ohara R."/>
            <person name="Inamoto S."/>
            <person name="Aizawa H."/>
            <person name="Yuasa S."/>
            <person name="Nakajima D."/>
            <person name="Nagase T."/>
            <person name="Ohara O."/>
            <person name="Koga H."/>
        </authorList>
    </citation>
    <scope>NUCLEOTIDE SEQUENCE [LARGE SCALE MRNA] OF 391-2009 (ISOFORM 3)</scope>
    <source>
        <tissue evidence="15">Brain</tissue>
    </source>
</reference>
<reference key="5">
    <citation type="submission" date="2009-01" db="UniProtKB">
        <authorList>
            <person name="Lubec G."/>
            <person name="Sunyer B."/>
            <person name="Chen W.-Q."/>
        </authorList>
    </citation>
    <scope>PROTEIN SEQUENCE OF 1261-1274</scope>
    <scope>IDENTIFICATION BY MASS SPECTROMETRY</scope>
    <source>
        <strain>OF1</strain>
        <tissue>Hippocampus</tissue>
    </source>
</reference>
<reference evidence="11" key="6">
    <citation type="journal article" date="2005" name="Mol. Cell. Biol.">
        <title>The ciliary rootlet maintains long-term stability of sensory cilia.</title>
        <authorList>
            <person name="Yang J."/>
            <person name="Gao J."/>
            <person name="Adamian M."/>
            <person name="Wen X.-H."/>
            <person name="Pawlyk B."/>
            <person name="Zhang L."/>
            <person name="Sanderson M.J."/>
            <person name="Zuo J."/>
            <person name="Makino C.L."/>
            <person name="Li T."/>
        </authorList>
    </citation>
    <scope>DISRUPTION PHENOTYPE</scope>
</reference>
<reference evidence="11" key="7">
    <citation type="journal article" date="2006" name="Mol. Biol. Cell">
        <title>Rootletin interacts with C-Nap1 and may function as a physical linker between the pair of centrioles/basal bodies in cells.</title>
        <authorList>
            <person name="Yang J."/>
            <person name="Adamian M."/>
            <person name="Li T."/>
        </authorList>
    </citation>
    <scope>SUBCELLULAR LOCATION</scope>
    <scope>INTERACTION WITH CEP250</scope>
</reference>
<reference key="8">
    <citation type="journal article" date="2010" name="Cell">
        <title>A tissue-specific atlas of mouse protein phosphorylation and expression.</title>
        <authorList>
            <person name="Huttlin E.L."/>
            <person name="Jedrychowski M.P."/>
            <person name="Elias J.E."/>
            <person name="Goswami T."/>
            <person name="Rad R."/>
            <person name="Beausoleil S.A."/>
            <person name="Villen J."/>
            <person name="Haas W."/>
            <person name="Sowa M.E."/>
            <person name="Gygi S.P."/>
        </authorList>
    </citation>
    <scope>PHOSPHORYLATION [LARGE SCALE ANALYSIS] AT SER-1463; SER-1469; TYR-1475; SER-1476; SER-1479; SER-1483; SER-1489 AND SER-1568</scope>
    <scope>IDENTIFICATION BY MASS SPECTROMETRY [LARGE SCALE ANALYSIS]</scope>
    <source>
        <tissue>Brain</tissue>
        <tissue>Kidney</tissue>
        <tissue>Lung</tissue>
        <tissue>Spleen</tissue>
        <tissue>Testis</tissue>
    </source>
</reference>
<protein>
    <recommendedName>
        <fullName>Rootletin</fullName>
    </recommendedName>
    <alternativeName>
        <fullName>Ciliary rootlet coiled-coil protein</fullName>
    </alternativeName>
</protein>
<organism>
    <name type="scientific">Mus musculus</name>
    <name type="common">Mouse</name>
    <dbReference type="NCBI Taxonomy" id="10090"/>
    <lineage>
        <taxon>Eukaryota</taxon>
        <taxon>Metazoa</taxon>
        <taxon>Chordata</taxon>
        <taxon>Craniata</taxon>
        <taxon>Vertebrata</taxon>
        <taxon>Euteleostomi</taxon>
        <taxon>Mammalia</taxon>
        <taxon>Eutheria</taxon>
        <taxon>Euarchontoglires</taxon>
        <taxon>Glires</taxon>
        <taxon>Rodentia</taxon>
        <taxon>Myomorpha</taxon>
        <taxon>Muroidea</taxon>
        <taxon>Muridae</taxon>
        <taxon>Murinae</taxon>
        <taxon>Mus</taxon>
        <taxon>Mus</taxon>
    </lineage>
</organism>
<dbReference type="EMBL" id="AF527975">
    <property type="protein sequence ID" value="AAN73044.1"/>
    <property type="molecule type" value="mRNA"/>
</dbReference>
<dbReference type="EMBL" id="AL645625">
    <property type="status" value="NOT_ANNOTATED_CDS"/>
    <property type="molecule type" value="Genomic_DNA"/>
</dbReference>
<dbReference type="EMBL" id="BC027090">
    <property type="protein sequence ID" value="AAH27090.1"/>
    <property type="status" value="ALT_INIT"/>
    <property type="molecule type" value="mRNA"/>
</dbReference>
<dbReference type="EMBL" id="BC054054">
    <property type="protein sequence ID" value="AAH54054.1"/>
    <property type="molecule type" value="mRNA"/>
</dbReference>
<dbReference type="EMBL" id="AK122285">
    <property type="protein sequence ID" value="BAC65567.3"/>
    <property type="molecule type" value="Transcribed_RNA"/>
</dbReference>
<dbReference type="CCDS" id="CCDS18861.1">
    <molecule id="Q8CJ40-1"/>
</dbReference>
<dbReference type="CCDS" id="CCDS51346.1">
    <molecule id="Q8CJ40-2"/>
</dbReference>
<dbReference type="RefSeq" id="NP_001139430.1">
    <molecule id="Q8CJ40-2"/>
    <property type="nucleotide sequence ID" value="NM_001145958.2"/>
</dbReference>
<dbReference type="RefSeq" id="NP_742120.2">
    <molecule id="Q8CJ40-1"/>
    <property type="nucleotide sequence ID" value="NM_172122.3"/>
</dbReference>
<dbReference type="SMR" id="Q8CJ40"/>
<dbReference type="BioGRID" id="231046">
    <property type="interactions" value="15"/>
</dbReference>
<dbReference type="FunCoup" id="Q8CJ40">
    <property type="interactions" value="221"/>
</dbReference>
<dbReference type="IntAct" id="Q8CJ40">
    <property type="interactions" value="6"/>
</dbReference>
<dbReference type="STRING" id="10090.ENSMUSP00000099549"/>
<dbReference type="GlyGen" id="Q8CJ40">
    <property type="glycosylation" value="1 site, 1 N-linked glycan (1 site)"/>
</dbReference>
<dbReference type="iPTMnet" id="Q8CJ40"/>
<dbReference type="PhosphoSitePlus" id="Q8CJ40"/>
<dbReference type="jPOST" id="Q8CJ40"/>
<dbReference type="PaxDb" id="10090-ENSMUSP00000099549"/>
<dbReference type="PeptideAtlas" id="Q8CJ40"/>
<dbReference type="ProteomicsDB" id="277898">
    <molecule id="Q8CJ40-1"/>
</dbReference>
<dbReference type="ProteomicsDB" id="277899">
    <molecule id="Q8CJ40-2"/>
</dbReference>
<dbReference type="ProteomicsDB" id="277900">
    <molecule id="Q8CJ40-3"/>
</dbReference>
<dbReference type="Pumba" id="Q8CJ40"/>
<dbReference type="Antibodypedia" id="14565">
    <property type="antibodies" value="33 antibodies from 14 providers"/>
</dbReference>
<dbReference type="Ensembl" id="ENSMUST00000040222.14">
    <molecule id="Q8CJ40-2"/>
    <property type="protein sequence ID" value="ENSMUSP00000037679.8"/>
    <property type="gene ID" value="ENSMUSG00000040860.17"/>
</dbReference>
<dbReference type="Ensembl" id="ENSMUST00000097816.9">
    <molecule id="Q8CJ40-2"/>
    <property type="protein sequence ID" value="ENSMUSP00000095425.3"/>
    <property type="gene ID" value="ENSMUSG00000040860.17"/>
</dbReference>
<dbReference type="Ensembl" id="ENSMUST00000102491.10">
    <molecule id="Q8CJ40-1"/>
    <property type="protein sequence ID" value="ENSMUSP00000099549.4"/>
    <property type="gene ID" value="ENSMUSG00000040860.17"/>
</dbReference>
<dbReference type="Ensembl" id="ENSMUST00000168157.8">
    <molecule id="Q8CJ40-2"/>
    <property type="protein sequence ID" value="ENSMUSP00000126543.2"/>
    <property type="gene ID" value="ENSMUSG00000040860.17"/>
</dbReference>
<dbReference type="GeneID" id="230872"/>
<dbReference type="KEGG" id="mmu:230872"/>
<dbReference type="UCSC" id="uc008vns.2">
    <molecule id="Q8CJ40-1"/>
    <property type="organism name" value="mouse"/>
</dbReference>
<dbReference type="UCSC" id="uc012dnz.1">
    <molecule id="Q8CJ40-2"/>
    <property type="organism name" value="mouse"/>
</dbReference>
<dbReference type="AGR" id="MGI:3529431"/>
<dbReference type="CTD" id="9696"/>
<dbReference type="MGI" id="MGI:3529431">
    <property type="gene designation" value="Crocc"/>
</dbReference>
<dbReference type="VEuPathDB" id="HostDB:ENSMUSG00000040860"/>
<dbReference type="eggNOG" id="ENOG502QQF0">
    <property type="taxonomic scope" value="Eukaryota"/>
</dbReference>
<dbReference type="GeneTree" id="ENSGT00940000155758"/>
<dbReference type="HOGENOM" id="CLU_000920_1_0_1"/>
<dbReference type="InParanoid" id="Q8CJ40"/>
<dbReference type="OMA" id="DPAQDCQ"/>
<dbReference type="OrthoDB" id="3549872at2759"/>
<dbReference type="PhylomeDB" id="Q8CJ40"/>
<dbReference type="TreeFam" id="TF101138"/>
<dbReference type="BioGRID-ORCS" id="230872">
    <property type="hits" value="6 hits in 78 CRISPR screens"/>
</dbReference>
<dbReference type="ChiTaRS" id="Crocc">
    <property type="organism name" value="mouse"/>
</dbReference>
<dbReference type="PRO" id="PR:Q8CJ40"/>
<dbReference type="Proteomes" id="UP000000589">
    <property type="component" value="Chromosome 4"/>
</dbReference>
<dbReference type="RNAct" id="Q8CJ40">
    <property type="molecule type" value="protein"/>
</dbReference>
<dbReference type="Bgee" id="ENSMUSG00000040860">
    <property type="expression patterns" value="Expressed in retinal neural layer and 175 other cell types or tissues"/>
</dbReference>
<dbReference type="ExpressionAtlas" id="Q8CJ40">
    <property type="expression patterns" value="baseline and differential"/>
</dbReference>
<dbReference type="GO" id="GO:0097729">
    <property type="term" value="C:9+2 motile cilium"/>
    <property type="evidence" value="ECO:0000314"/>
    <property type="project" value="MGI"/>
</dbReference>
<dbReference type="GO" id="GO:0015629">
    <property type="term" value="C:actin cytoskeleton"/>
    <property type="evidence" value="ECO:0007669"/>
    <property type="project" value="Ensembl"/>
</dbReference>
<dbReference type="GO" id="GO:0005814">
    <property type="term" value="C:centriole"/>
    <property type="evidence" value="ECO:0000314"/>
    <property type="project" value="UniProtKB"/>
</dbReference>
<dbReference type="GO" id="GO:0005813">
    <property type="term" value="C:centrosome"/>
    <property type="evidence" value="ECO:0000250"/>
    <property type="project" value="UniProtKB"/>
</dbReference>
<dbReference type="GO" id="GO:0036064">
    <property type="term" value="C:ciliary basal body"/>
    <property type="evidence" value="ECO:0007669"/>
    <property type="project" value="Ensembl"/>
</dbReference>
<dbReference type="GO" id="GO:0035253">
    <property type="term" value="C:ciliary rootlet"/>
    <property type="evidence" value="ECO:0000314"/>
    <property type="project" value="MGI"/>
</dbReference>
<dbReference type="GO" id="GO:0005829">
    <property type="term" value="C:cytosol"/>
    <property type="evidence" value="ECO:0007669"/>
    <property type="project" value="Ensembl"/>
</dbReference>
<dbReference type="GO" id="GO:0097386">
    <property type="term" value="C:glial cell projection"/>
    <property type="evidence" value="ECO:0000314"/>
    <property type="project" value="MGI"/>
</dbReference>
<dbReference type="GO" id="GO:0001917">
    <property type="term" value="C:photoreceptor inner segment"/>
    <property type="evidence" value="ECO:0000314"/>
    <property type="project" value="MGI"/>
</dbReference>
<dbReference type="GO" id="GO:0005886">
    <property type="term" value="C:plasma membrane"/>
    <property type="evidence" value="ECO:0007669"/>
    <property type="project" value="Ensembl"/>
</dbReference>
<dbReference type="GO" id="GO:0120219">
    <property type="term" value="C:subapical part of cell"/>
    <property type="evidence" value="ECO:0000314"/>
    <property type="project" value="MGI"/>
</dbReference>
<dbReference type="GO" id="GO:0003779">
    <property type="term" value="F:actin binding"/>
    <property type="evidence" value="ECO:0000314"/>
    <property type="project" value="MGI"/>
</dbReference>
<dbReference type="GO" id="GO:0019894">
    <property type="term" value="F:kinesin binding"/>
    <property type="evidence" value="ECO:0000353"/>
    <property type="project" value="MGI"/>
</dbReference>
<dbReference type="GO" id="GO:0005200">
    <property type="term" value="F:structural constituent of cytoskeleton"/>
    <property type="evidence" value="ECO:0000315"/>
    <property type="project" value="MGI"/>
</dbReference>
<dbReference type="GO" id="GO:0005198">
    <property type="term" value="F:structural molecule activity"/>
    <property type="evidence" value="ECO:0000314"/>
    <property type="project" value="UniProtKB"/>
</dbReference>
<dbReference type="GO" id="GO:0019725">
    <property type="term" value="P:cellular homeostasis"/>
    <property type="evidence" value="ECO:0000315"/>
    <property type="project" value="MGI"/>
</dbReference>
<dbReference type="GO" id="GO:0010457">
    <property type="term" value="P:centriole-centriole cohesion"/>
    <property type="evidence" value="ECO:0007669"/>
    <property type="project" value="Ensembl"/>
</dbReference>
<dbReference type="GO" id="GO:0007098">
    <property type="term" value="P:centrosome cycle"/>
    <property type="evidence" value="ECO:0000250"/>
    <property type="project" value="UniProtKB"/>
</dbReference>
<dbReference type="GO" id="GO:0032053">
    <property type="term" value="P:ciliary basal body organization"/>
    <property type="evidence" value="ECO:0000315"/>
    <property type="project" value="MGI"/>
</dbReference>
<dbReference type="GO" id="GO:0010669">
    <property type="term" value="P:epithelial structure maintenance"/>
    <property type="evidence" value="ECO:0000315"/>
    <property type="project" value="MGI"/>
</dbReference>
<dbReference type="GO" id="GO:0051649">
    <property type="term" value="P:establishment of localization in cell"/>
    <property type="evidence" value="ECO:0000315"/>
    <property type="project" value="MGI"/>
</dbReference>
<dbReference type="GO" id="GO:0051656">
    <property type="term" value="P:establishment of organelle localization"/>
    <property type="evidence" value="ECO:0000315"/>
    <property type="project" value="MGI"/>
</dbReference>
<dbReference type="GO" id="GO:0045494">
    <property type="term" value="P:photoreceptor cell maintenance"/>
    <property type="evidence" value="ECO:0000315"/>
    <property type="project" value="MGI"/>
</dbReference>
<dbReference type="GO" id="GO:0045724">
    <property type="term" value="P:positive regulation of cilium assembly"/>
    <property type="evidence" value="ECO:0007669"/>
    <property type="project" value="Ensembl"/>
</dbReference>
<dbReference type="GO" id="GO:1903566">
    <property type="term" value="P:positive regulation of protein localization to cilium"/>
    <property type="evidence" value="ECO:0007669"/>
    <property type="project" value="Ensembl"/>
</dbReference>
<dbReference type="GO" id="GO:0033365">
    <property type="term" value="P:protein localization to organelle"/>
    <property type="evidence" value="ECO:0007669"/>
    <property type="project" value="Ensembl"/>
</dbReference>
<dbReference type="Gene3D" id="1.10.287.1490">
    <property type="match status" value="1"/>
</dbReference>
<dbReference type="InterPro" id="IPR055167">
    <property type="entry name" value="Rootletin-like_CC"/>
</dbReference>
<dbReference type="PANTHER" id="PTHR23159">
    <property type="entry name" value="CENTROSOMAL PROTEIN 2"/>
    <property type="match status" value="1"/>
</dbReference>
<dbReference type="PANTHER" id="PTHR23159:SF31">
    <property type="entry name" value="CENTROSOME-ASSOCIATED PROTEIN CEP250 ISOFORM X1"/>
    <property type="match status" value="1"/>
</dbReference>
<dbReference type="Pfam" id="PF15035">
    <property type="entry name" value="Rootletin"/>
    <property type="match status" value="1"/>
</dbReference>
<dbReference type="SUPFAM" id="SSF57997">
    <property type="entry name" value="Tropomyosin"/>
    <property type="match status" value="2"/>
</dbReference>
<proteinExistence type="evidence at protein level"/>
<evidence type="ECO:0000250" key="1">
    <source>
        <dbReference type="UniProtKB" id="Q5TZA2"/>
    </source>
</evidence>
<evidence type="ECO:0000255" key="2"/>
<evidence type="ECO:0000256" key="3">
    <source>
        <dbReference type="SAM" id="MobiDB-lite"/>
    </source>
</evidence>
<evidence type="ECO:0000269" key="4">
    <source>
    </source>
</evidence>
<evidence type="ECO:0000269" key="5">
    <source>
    </source>
</evidence>
<evidence type="ECO:0000269" key="6">
    <source>
    </source>
</evidence>
<evidence type="ECO:0000269" key="7">
    <source>
    </source>
</evidence>
<evidence type="ECO:0000269" key="8">
    <source>
    </source>
</evidence>
<evidence type="ECO:0000303" key="9">
    <source>
    </source>
</evidence>
<evidence type="ECO:0000303" key="10">
    <source>
    </source>
</evidence>
<evidence type="ECO:0000305" key="11"/>
<evidence type="ECO:0000312" key="12">
    <source>
        <dbReference type="EMBL" id="AAH27090.1"/>
    </source>
</evidence>
<evidence type="ECO:0000312" key="13">
    <source>
        <dbReference type="EMBL" id="AAH54054.1"/>
    </source>
</evidence>
<evidence type="ECO:0000312" key="14">
    <source>
        <dbReference type="EMBL" id="AAN73044.1"/>
    </source>
</evidence>
<evidence type="ECO:0000312" key="15">
    <source>
        <dbReference type="EMBL" id="BAC65567.3"/>
    </source>
</evidence>
<evidence type="ECO:0000312" key="16">
    <source>
        <dbReference type="MGI" id="MGI:3529431"/>
    </source>
</evidence>
<evidence type="ECO:0007744" key="17">
    <source>
    </source>
</evidence>
<comment type="function">
    <text evidence="1 4">Major structural component of the ciliary rootlet, a cytoskeletal-like structure in ciliated cells which originates from the basal body at the proximal end of a cilium and extends proximally toward the cell nucleus (PubMed:12427867). Furthermore, is required for the correct positioning of the cilium basal body relative to the cell nucleus, to allow for ciliogenesis (By similarity). Contributes to centrosome cohesion before mitosis (By similarity).</text>
</comment>
<comment type="subunit">
    <text evidence="1 4 8">Homomer. Interacts with KLC3, NEK2 and the N-terminus of CEP250 (PubMed:12427867, PubMed:16339073). Interacts with CEP44 (By similarity).</text>
</comment>
<comment type="subcellular location">
    <subcellularLocation>
        <location evidence="4 8">Cytoplasm</location>
        <location evidence="4 8">Cytoskeleton</location>
        <location evidence="4 8">Microtubule organizing center</location>
        <location evidence="4 8">Centrosome</location>
        <location evidence="4 8">Centriole</location>
    </subcellularLocation>
    <subcellularLocation>
        <location evidence="1">Cytoplasm</location>
        <location evidence="1">Cytoskeleton</location>
        <location evidence="1">Cilium basal body</location>
    </subcellularLocation>
    <subcellularLocation>
        <location evidence="1">Cytoplasm</location>
        <location evidence="1">Cytoskeleton</location>
        <location evidence="1">Microtubule organizing center</location>
        <location evidence="1">Centrosome</location>
    </subcellularLocation>
    <text evidence="4 8">In ciliated cells, associated with ciliary rootlets. In non-ciliated cells, localized between, around and at the proximal ends of the centrioles. Dissociates from the centrioles at the onset of mitosis and reassociates with them at anaphase.</text>
</comment>
<comment type="alternative products">
    <event type="alternative splicing"/>
    <isoform>
        <id>Q8CJ40-1</id>
        <name evidence="4">1</name>
        <sequence type="displayed"/>
    </isoform>
    <isoform>
        <id>Q8CJ40-2</id>
        <name evidence="6">2</name>
        <sequence type="described" ref="VSP_052066 VSP_052067"/>
    </isoform>
    <isoform>
        <id>Q8CJ40-3</id>
        <name evidence="5">3</name>
        <sequence type="described" ref="VSP_052068"/>
    </isoform>
</comment>
<comment type="tissue specificity">
    <text evidence="4">Highest expression detected in photoreceptor cells of retina. Expressed at lower levels in brain, trachea and kidney. Detected in all major ciliated epithelia. During embryonic development, enriched along the apical domains of neuroepithelium in brain ventricular zone, in primordia of retinal pigment epithelia and in neural retina.</text>
</comment>
<comment type="PTM">
    <text>Phosphorylated by NEK2 which may regulate its association with centrosomes.</text>
</comment>
<comment type="disruption phenotype">
    <text evidence="7">Mice have no ciliary rootlets in ciliated cells.</text>
</comment>
<comment type="similarity">
    <text evidence="11">Belongs to the rootletin family.</text>
</comment>
<comment type="sequence caution" evidence="11">
    <conflict type="erroneous initiation">
        <sequence resource="EMBL-CDS" id="AAH27090"/>
    </conflict>
    <text>Extended N-terminus.</text>
</comment>
<feature type="chain" id="PRO_0000239944" description="Rootletin">
    <location>
        <begin position="1"/>
        <end position="2009"/>
    </location>
</feature>
<feature type="region of interest" description="Disordered" evidence="3">
    <location>
        <begin position="462"/>
        <end position="519"/>
    </location>
</feature>
<feature type="region of interest" description="Disordered" evidence="3">
    <location>
        <begin position="575"/>
        <end position="594"/>
    </location>
</feature>
<feature type="region of interest" description="Disordered" evidence="3">
    <location>
        <begin position="636"/>
        <end position="665"/>
    </location>
</feature>
<feature type="region of interest" description="Disordered" evidence="3">
    <location>
        <begin position="1180"/>
        <end position="1225"/>
    </location>
</feature>
<feature type="region of interest" description="Disordered" evidence="3">
    <location>
        <begin position="1448"/>
        <end position="1501"/>
    </location>
</feature>
<feature type="region of interest" description="Disordered" evidence="3">
    <location>
        <begin position="1957"/>
        <end position="2009"/>
    </location>
</feature>
<feature type="coiled-coil region" evidence="2">
    <location>
        <begin position="74"/>
        <end position="265"/>
    </location>
</feature>
<feature type="coiled-coil region" evidence="2">
    <location>
        <begin position="346"/>
        <end position="438"/>
    </location>
</feature>
<feature type="coiled-coil region" evidence="2">
    <location>
        <begin position="550"/>
        <end position="1058"/>
    </location>
</feature>
<feature type="coiled-coil region" evidence="2">
    <location>
        <begin position="1091"/>
        <end position="1439"/>
    </location>
</feature>
<feature type="coiled-coil region" evidence="2">
    <location>
        <begin position="1498"/>
        <end position="1697"/>
    </location>
</feature>
<feature type="coiled-coil region" evidence="2">
    <location>
        <begin position="1744"/>
        <end position="1998"/>
    </location>
</feature>
<feature type="compositionally biased region" description="Polar residues" evidence="3">
    <location>
        <begin position="463"/>
        <end position="484"/>
    </location>
</feature>
<feature type="compositionally biased region" description="Low complexity" evidence="3">
    <location>
        <begin position="577"/>
        <end position="586"/>
    </location>
</feature>
<feature type="compositionally biased region" description="Basic and acidic residues" evidence="3">
    <location>
        <begin position="656"/>
        <end position="665"/>
    </location>
</feature>
<feature type="compositionally biased region" description="Pro residues" evidence="3">
    <location>
        <begin position="1479"/>
        <end position="1494"/>
    </location>
</feature>
<feature type="modified residue" description="Phosphoserine" evidence="1">
    <location>
        <position position="1453"/>
    </location>
</feature>
<feature type="modified residue" description="Phosphoserine" evidence="17">
    <location>
        <position position="1463"/>
    </location>
</feature>
<feature type="modified residue" description="Phosphoserine" evidence="17">
    <location>
        <position position="1469"/>
    </location>
</feature>
<feature type="modified residue" description="Phosphotyrosine" evidence="17">
    <location>
        <position position="1475"/>
    </location>
</feature>
<feature type="modified residue" description="Phosphoserine" evidence="17">
    <location>
        <position position="1476"/>
    </location>
</feature>
<feature type="modified residue" description="Phosphoserine" evidence="17">
    <location>
        <position position="1479"/>
    </location>
</feature>
<feature type="modified residue" description="Phosphoserine" evidence="17">
    <location>
        <position position="1483"/>
    </location>
</feature>
<feature type="modified residue" description="Phosphoserine" evidence="17">
    <location>
        <position position="1489"/>
    </location>
</feature>
<feature type="modified residue" description="Phosphoserine" evidence="17">
    <location>
        <position position="1568"/>
    </location>
</feature>
<feature type="splice variant" id="VSP_052066" description="In isoform 2." evidence="10">
    <location>
        <begin position="1"/>
        <end position="74"/>
    </location>
</feature>
<feature type="splice variant" id="VSP_052067" description="In isoform 2." evidence="10">
    <location>
        <begin position="120"/>
        <end position="209"/>
    </location>
</feature>
<feature type="splice variant" id="VSP_052068" description="In isoform 3." evidence="9">
    <location>
        <begin position="1136"/>
        <end position="1156"/>
    </location>
</feature>
<feature type="sequence conflict" description="In Ref. 1; AAN73044 and 3; AAH54054." evidence="11" ref="1 3">
    <original>T</original>
    <variation>A</variation>
    <location>
        <position position="289"/>
    </location>
</feature>
<feature type="sequence conflict" description="In Ref. 3; AAH54054." evidence="11" ref="3">
    <original>E</original>
    <variation>G</variation>
    <location>
        <position position="360"/>
    </location>
</feature>
<feature type="sequence conflict" description="In Ref. 3; AAH54054." evidence="11" ref="3">
    <original>V</original>
    <variation>M</variation>
    <location>
        <position position="811"/>
    </location>
</feature>
<feature type="sequence conflict" description="In Ref. 3; AAH54054." evidence="11" ref="3">
    <original>K</original>
    <variation>E</variation>
    <location>
        <position position="1041"/>
    </location>
</feature>
<feature type="sequence conflict" description="In Ref. 3; BAC65567." evidence="11" ref="3">
    <original>L</original>
    <variation>V</variation>
    <location>
        <position position="1346"/>
    </location>
</feature>
<feature type="sequence conflict" description="In Ref. 3; AAH54054." evidence="11" ref="3">
    <original>F</original>
    <variation>L</variation>
    <location>
        <position position="1864"/>
    </location>
</feature>